<keyword id="KW-0665">Pyrimidine biosynthesis</keyword>
<keyword id="KW-1185">Reference proteome</keyword>
<keyword id="KW-0808">Transferase</keyword>
<feature type="chain" id="PRO_1000000023" description="Aspartate carbamoyltransferase catalytic subunit">
    <location>
        <begin position="1"/>
        <end position="312"/>
    </location>
</feature>
<feature type="binding site" evidence="1">
    <location>
        <position position="58"/>
    </location>
    <ligand>
        <name>carbamoyl phosphate</name>
        <dbReference type="ChEBI" id="CHEBI:58228"/>
    </ligand>
</feature>
<feature type="binding site" evidence="1">
    <location>
        <position position="59"/>
    </location>
    <ligand>
        <name>carbamoyl phosphate</name>
        <dbReference type="ChEBI" id="CHEBI:58228"/>
    </ligand>
</feature>
<feature type="binding site" evidence="1">
    <location>
        <position position="86"/>
    </location>
    <ligand>
        <name>L-aspartate</name>
        <dbReference type="ChEBI" id="CHEBI:29991"/>
    </ligand>
</feature>
<feature type="binding site" evidence="1">
    <location>
        <position position="108"/>
    </location>
    <ligand>
        <name>carbamoyl phosphate</name>
        <dbReference type="ChEBI" id="CHEBI:58228"/>
    </ligand>
</feature>
<feature type="binding site" evidence="1">
    <location>
        <position position="136"/>
    </location>
    <ligand>
        <name>carbamoyl phosphate</name>
        <dbReference type="ChEBI" id="CHEBI:58228"/>
    </ligand>
</feature>
<feature type="binding site" evidence="1">
    <location>
        <position position="139"/>
    </location>
    <ligand>
        <name>carbamoyl phosphate</name>
        <dbReference type="ChEBI" id="CHEBI:58228"/>
    </ligand>
</feature>
<feature type="binding site" evidence="1">
    <location>
        <position position="169"/>
    </location>
    <ligand>
        <name>L-aspartate</name>
        <dbReference type="ChEBI" id="CHEBI:29991"/>
    </ligand>
</feature>
<feature type="binding site" evidence="1">
    <location>
        <position position="223"/>
    </location>
    <ligand>
        <name>L-aspartate</name>
        <dbReference type="ChEBI" id="CHEBI:29991"/>
    </ligand>
</feature>
<feature type="binding site" evidence="1">
    <location>
        <position position="264"/>
    </location>
    <ligand>
        <name>carbamoyl phosphate</name>
        <dbReference type="ChEBI" id="CHEBI:58228"/>
    </ligand>
</feature>
<feature type="binding site" evidence="1">
    <location>
        <position position="265"/>
    </location>
    <ligand>
        <name>carbamoyl phosphate</name>
        <dbReference type="ChEBI" id="CHEBI:58228"/>
    </ligand>
</feature>
<gene>
    <name evidence="1" type="primary">pyrB</name>
    <name type="ordered locus">Swol_1284</name>
</gene>
<reference key="1">
    <citation type="journal article" date="2010" name="Environ. Microbiol.">
        <title>The genome of Syntrophomonas wolfei: new insights into syntrophic metabolism and biohydrogen production.</title>
        <authorList>
            <person name="Sieber J.R."/>
            <person name="Sims D.R."/>
            <person name="Han C."/>
            <person name="Kim E."/>
            <person name="Lykidis A."/>
            <person name="Lapidus A.L."/>
            <person name="McDonnald E."/>
            <person name="Rohlin L."/>
            <person name="Culley D.E."/>
            <person name="Gunsalus R."/>
            <person name="McInerney M.J."/>
        </authorList>
    </citation>
    <scope>NUCLEOTIDE SEQUENCE [LARGE SCALE GENOMIC DNA]</scope>
    <source>
        <strain>DSM 2245B / Goettingen</strain>
    </source>
</reference>
<proteinExistence type="inferred from homology"/>
<name>PYRB_SYNWW</name>
<dbReference type="EC" id="2.1.3.2" evidence="1"/>
<dbReference type="EMBL" id="CP000448">
    <property type="protein sequence ID" value="ABI68593.1"/>
    <property type="molecule type" value="Genomic_DNA"/>
</dbReference>
<dbReference type="RefSeq" id="WP_011640695.1">
    <property type="nucleotide sequence ID" value="NC_008346.1"/>
</dbReference>
<dbReference type="SMR" id="Q0AXG1"/>
<dbReference type="STRING" id="335541.Swol_1284"/>
<dbReference type="KEGG" id="swo:Swol_1284"/>
<dbReference type="eggNOG" id="COG0540">
    <property type="taxonomic scope" value="Bacteria"/>
</dbReference>
<dbReference type="HOGENOM" id="CLU_043846_2_0_9"/>
<dbReference type="OrthoDB" id="9802587at2"/>
<dbReference type="UniPathway" id="UPA00070">
    <property type="reaction ID" value="UER00116"/>
</dbReference>
<dbReference type="Proteomes" id="UP000001968">
    <property type="component" value="Chromosome"/>
</dbReference>
<dbReference type="GO" id="GO:0005829">
    <property type="term" value="C:cytosol"/>
    <property type="evidence" value="ECO:0007669"/>
    <property type="project" value="TreeGrafter"/>
</dbReference>
<dbReference type="GO" id="GO:0016597">
    <property type="term" value="F:amino acid binding"/>
    <property type="evidence" value="ECO:0007669"/>
    <property type="project" value="InterPro"/>
</dbReference>
<dbReference type="GO" id="GO:0004070">
    <property type="term" value="F:aspartate carbamoyltransferase activity"/>
    <property type="evidence" value="ECO:0007669"/>
    <property type="project" value="UniProtKB-UniRule"/>
</dbReference>
<dbReference type="GO" id="GO:0006207">
    <property type="term" value="P:'de novo' pyrimidine nucleobase biosynthetic process"/>
    <property type="evidence" value="ECO:0007669"/>
    <property type="project" value="InterPro"/>
</dbReference>
<dbReference type="GO" id="GO:0044205">
    <property type="term" value="P:'de novo' UMP biosynthetic process"/>
    <property type="evidence" value="ECO:0007669"/>
    <property type="project" value="UniProtKB-UniRule"/>
</dbReference>
<dbReference type="GO" id="GO:0006520">
    <property type="term" value="P:amino acid metabolic process"/>
    <property type="evidence" value="ECO:0007669"/>
    <property type="project" value="InterPro"/>
</dbReference>
<dbReference type="FunFam" id="3.40.50.1370:FF:000007">
    <property type="entry name" value="Aspartate carbamoyltransferase"/>
    <property type="match status" value="1"/>
</dbReference>
<dbReference type="Gene3D" id="3.40.50.1370">
    <property type="entry name" value="Aspartate/ornithine carbamoyltransferase"/>
    <property type="match status" value="2"/>
</dbReference>
<dbReference type="HAMAP" id="MF_00001">
    <property type="entry name" value="Asp_carb_tr"/>
    <property type="match status" value="1"/>
</dbReference>
<dbReference type="InterPro" id="IPR006132">
    <property type="entry name" value="Asp/Orn_carbamoyltranf_P-bd"/>
</dbReference>
<dbReference type="InterPro" id="IPR006130">
    <property type="entry name" value="Asp/Orn_carbamoylTrfase"/>
</dbReference>
<dbReference type="InterPro" id="IPR036901">
    <property type="entry name" value="Asp/Orn_carbamoylTrfase_sf"/>
</dbReference>
<dbReference type="InterPro" id="IPR002082">
    <property type="entry name" value="Asp_carbamoyltransf"/>
</dbReference>
<dbReference type="InterPro" id="IPR006131">
    <property type="entry name" value="Asp_carbamoyltransf_Asp/Orn-bd"/>
</dbReference>
<dbReference type="NCBIfam" id="TIGR00670">
    <property type="entry name" value="asp_carb_tr"/>
    <property type="match status" value="1"/>
</dbReference>
<dbReference type="NCBIfam" id="NF002032">
    <property type="entry name" value="PRK00856.1"/>
    <property type="match status" value="1"/>
</dbReference>
<dbReference type="PANTHER" id="PTHR45753:SF6">
    <property type="entry name" value="ASPARTATE CARBAMOYLTRANSFERASE"/>
    <property type="match status" value="1"/>
</dbReference>
<dbReference type="PANTHER" id="PTHR45753">
    <property type="entry name" value="ORNITHINE CARBAMOYLTRANSFERASE, MITOCHONDRIAL"/>
    <property type="match status" value="1"/>
</dbReference>
<dbReference type="Pfam" id="PF00185">
    <property type="entry name" value="OTCace"/>
    <property type="match status" value="1"/>
</dbReference>
<dbReference type="Pfam" id="PF02729">
    <property type="entry name" value="OTCace_N"/>
    <property type="match status" value="1"/>
</dbReference>
<dbReference type="PRINTS" id="PR00100">
    <property type="entry name" value="AOTCASE"/>
</dbReference>
<dbReference type="PRINTS" id="PR00101">
    <property type="entry name" value="ATCASE"/>
</dbReference>
<dbReference type="SUPFAM" id="SSF53671">
    <property type="entry name" value="Aspartate/ornithine carbamoyltransferase"/>
    <property type="match status" value="1"/>
</dbReference>
<dbReference type="PROSITE" id="PS00097">
    <property type="entry name" value="CARBAMOYLTRANSFERASE"/>
    <property type="match status" value="1"/>
</dbReference>
<protein>
    <recommendedName>
        <fullName evidence="1">Aspartate carbamoyltransferase catalytic subunit</fullName>
        <ecNumber evidence="1">2.1.3.2</ecNumber>
    </recommendedName>
    <alternativeName>
        <fullName evidence="1">Aspartate transcarbamylase</fullName>
        <shortName evidence="1">ATCase</shortName>
    </alternativeName>
</protein>
<comment type="function">
    <text evidence="1">Catalyzes the condensation of carbamoyl phosphate and aspartate to form carbamoyl aspartate and inorganic phosphate, the committed step in the de novo pyrimidine nucleotide biosynthesis pathway.</text>
</comment>
<comment type="catalytic activity">
    <reaction evidence="1">
        <text>carbamoyl phosphate + L-aspartate = N-carbamoyl-L-aspartate + phosphate + H(+)</text>
        <dbReference type="Rhea" id="RHEA:20013"/>
        <dbReference type="ChEBI" id="CHEBI:15378"/>
        <dbReference type="ChEBI" id="CHEBI:29991"/>
        <dbReference type="ChEBI" id="CHEBI:32814"/>
        <dbReference type="ChEBI" id="CHEBI:43474"/>
        <dbReference type="ChEBI" id="CHEBI:58228"/>
        <dbReference type="EC" id="2.1.3.2"/>
    </reaction>
</comment>
<comment type="pathway">
    <text evidence="1">Pyrimidine metabolism; UMP biosynthesis via de novo pathway; (S)-dihydroorotate from bicarbonate: step 2/3.</text>
</comment>
<comment type="subunit">
    <text evidence="1">Heterododecamer (2C3:3R2) of six catalytic PyrB chains organized as two trimers (C3), and six regulatory PyrI chains organized as three dimers (R2).</text>
</comment>
<comment type="similarity">
    <text evidence="1">Belongs to the aspartate/ornithine carbamoyltransferase superfamily. ATCase family.</text>
</comment>
<accession>Q0AXG1</accession>
<organism>
    <name type="scientific">Syntrophomonas wolfei subsp. wolfei (strain DSM 2245B / Goettingen)</name>
    <dbReference type="NCBI Taxonomy" id="335541"/>
    <lineage>
        <taxon>Bacteria</taxon>
        <taxon>Bacillati</taxon>
        <taxon>Bacillota</taxon>
        <taxon>Clostridia</taxon>
        <taxon>Eubacteriales</taxon>
        <taxon>Syntrophomonadaceae</taxon>
        <taxon>Syntrophomonas</taxon>
    </lineage>
</organism>
<evidence type="ECO:0000255" key="1">
    <source>
        <dbReference type="HAMAP-Rule" id="MF_00001"/>
    </source>
</evidence>
<sequence>MKLDRKDLLGLRDLSREETELILNTAIPMKDVICRDIKKVPTLRGKALVTVFYENSTRTRTSFELAGKYLSADTVNLSVSTSSVQKGESLRDTIKTIEVMGFDLMVMRHAMSGTPHYVARNTRMRVINAGDGANEHPTQALLDMYTIKEKKGTLESLKVAIVGDILHSRVARSNIYGLSKFGCDIRVVGPATLMPPGIEKLGVKSYYSLDEAINGVDVINILRIQRERQVSGLFPSLDEYAQLYMLSPQTLARAKDDVLVLHPGPINRGVEISSELADSAQALINEQVTNGVAIRMALLFLMMGGGRDEITY</sequence>